<evidence type="ECO:0000255" key="1">
    <source>
        <dbReference type="HAMAP-Rule" id="MF_00116"/>
    </source>
</evidence>
<protein>
    <recommendedName>
        <fullName evidence="1">Deoxyuridine 5'-triphosphate nucleotidohydrolase</fullName>
        <shortName evidence="1">dUTPase</shortName>
        <ecNumber evidence="1">3.6.1.23</ecNumber>
    </recommendedName>
    <alternativeName>
        <fullName evidence="1">dUTP pyrophosphatase</fullName>
    </alternativeName>
</protein>
<organism>
    <name type="scientific">Aquifex aeolicus (strain VF5)</name>
    <dbReference type="NCBI Taxonomy" id="224324"/>
    <lineage>
        <taxon>Bacteria</taxon>
        <taxon>Pseudomonadati</taxon>
        <taxon>Aquificota</taxon>
        <taxon>Aquificia</taxon>
        <taxon>Aquificales</taxon>
        <taxon>Aquificaceae</taxon>
        <taxon>Aquifex</taxon>
    </lineage>
</organism>
<dbReference type="EC" id="3.6.1.23" evidence="1"/>
<dbReference type="EMBL" id="AE000657">
    <property type="protein sequence ID" value="AAC06559.1"/>
    <property type="molecule type" value="Genomic_DNA"/>
</dbReference>
<dbReference type="PIR" id="D70320">
    <property type="entry name" value="D70320"/>
</dbReference>
<dbReference type="RefSeq" id="NP_213152.1">
    <property type="nucleotide sequence ID" value="NC_000918.1"/>
</dbReference>
<dbReference type="RefSeq" id="WP_010880090.1">
    <property type="nucleotide sequence ID" value="NC_000918.1"/>
</dbReference>
<dbReference type="PDB" id="8Y1Q">
    <property type="method" value="X-ray"/>
    <property type="resolution" value="2.42 A"/>
    <property type="chains" value="A/B/C=1-150"/>
</dbReference>
<dbReference type="PDBsum" id="8Y1Q"/>
<dbReference type="SMR" id="O66592"/>
<dbReference type="FunCoup" id="O66592">
    <property type="interactions" value="334"/>
</dbReference>
<dbReference type="STRING" id="224324.aq_220"/>
<dbReference type="EnsemblBacteria" id="AAC06559">
    <property type="protein sequence ID" value="AAC06559"/>
    <property type="gene ID" value="aq_220"/>
</dbReference>
<dbReference type="KEGG" id="aae:aq_220"/>
<dbReference type="PATRIC" id="fig|224324.8.peg.183"/>
<dbReference type="eggNOG" id="COG0756">
    <property type="taxonomic scope" value="Bacteria"/>
</dbReference>
<dbReference type="HOGENOM" id="CLU_068508_1_2_0"/>
<dbReference type="InParanoid" id="O66592"/>
<dbReference type="OrthoDB" id="9809956at2"/>
<dbReference type="UniPathway" id="UPA00610">
    <property type="reaction ID" value="UER00666"/>
</dbReference>
<dbReference type="Proteomes" id="UP000000798">
    <property type="component" value="Chromosome"/>
</dbReference>
<dbReference type="GO" id="GO:0004170">
    <property type="term" value="F:dUTP diphosphatase activity"/>
    <property type="evidence" value="ECO:0000318"/>
    <property type="project" value="GO_Central"/>
</dbReference>
<dbReference type="GO" id="GO:0000287">
    <property type="term" value="F:magnesium ion binding"/>
    <property type="evidence" value="ECO:0000318"/>
    <property type="project" value="GO_Central"/>
</dbReference>
<dbReference type="GO" id="GO:0006226">
    <property type="term" value="P:dUMP biosynthetic process"/>
    <property type="evidence" value="ECO:0000318"/>
    <property type="project" value="GO_Central"/>
</dbReference>
<dbReference type="GO" id="GO:0046081">
    <property type="term" value="P:dUTP catabolic process"/>
    <property type="evidence" value="ECO:0000318"/>
    <property type="project" value="GO_Central"/>
</dbReference>
<dbReference type="CDD" id="cd07557">
    <property type="entry name" value="trimeric_dUTPase"/>
    <property type="match status" value="1"/>
</dbReference>
<dbReference type="FunFam" id="2.70.40.10:FF:000002">
    <property type="entry name" value="dUTP diphosphatase"/>
    <property type="match status" value="1"/>
</dbReference>
<dbReference type="Gene3D" id="2.70.40.10">
    <property type="match status" value="1"/>
</dbReference>
<dbReference type="HAMAP" id="MF_00116">
    <property type="entry name" value="dUTPase_bact"/>
    <property type="match status" value="1"/>
</dbReference>
<dbReference type="InterPro" id="IPR008181">
    <property type="entry name" value="dUTPase"/>
</dbReference>
<dbReference type="InterPro" id="IPR029054">
    <property type="entry name" value="dUTPase-like"/>
</dbReference>
<dbReference type="InterPro" id="IPR036157">
    <property type="entry name" value="dUTPase-like_sf"/>
</dbReference>
<dbReference type="InterPro" id="IPR033704">
    <property type="entry name" value="dUTPase_trimeric"/>
</dbReference>
<dbReference type="NCBIfam" id="TIGR00576">
    <property type="entry name" value="dut"/>
    <property type="match status" value="1"/>
</dbReference>
<dbReference type="NCBIfam" id="NF001862">
    <property type="entry name" value="PRK00601.1"/>
    <property type="match status" value="1"/>
</dbReference>
<dbReference type="PANTHER" id="PTHR11241">
    <property type="entry name" value="DEOXYURIDINE 5'-TRIPHOSPHATE NUCLEOTIDOHYDROLASE"/>
    <property type="match status" value="1"/>
</dbReference>
<dbReference type="PANTHER" id="PTHR11241:SF0">
    <property type="entry name" value="DEOXYURIDINE 5'-TRIPHOSPHATE NUCLEOTIDOHYDROLASE"/>
    <property type="match status" value="1"/>
</dbReference>
<dbReference type="Pfam" id="PF00692">
    <property type="entry name" value="dUTPase"/>
    <property type="match status" value="1"/>
</dbReference>
<dbReference type="SUPFAM" id="SSF51283">
    <property type="entry name" value="dUTPase-like"/>
    <property type="match status" value="1"/>
</dbReference>
<keyword id="KW-0002">3D-structure</keyword>
<keyword id="KW-0378">Hydrolase</keyword>
<keyword id="KW-0460">Magnesium</keyword>
<keyword id="KW-0479">Metal-binding</keyword>
<keyword id="KW-0546">Nucleotide metabolism</keyword>
<keyword id="KW-1185">Reference proteome</keyword>
<reference key="1">
    <citation type="journal article" date="1998" name="Nature">
        <title>The complete genome of the hyperthermophilic bacterium Aquifex aeolicus.</title>
        <authorList>
            <person name="Deckert G."/>
            <person name="Warren P.V."/>
            <person name="Gaasterland T."/>
            <person name="Young W.G."/>
            <person name="Lenox A.L."/>
            <person name="Graham D.E."/>
            <person name="Overbeek R."/>
            <person name="Snead M.A."/>
            <person name="Keller M."/>
            <person name="Aujay M."/>
            <person name="Huber R."/>
            <person name="Feldman R.A."/>
            <person name="Short J.M."/>
            <person name="Olsen G.J."/>
            <person name="Swanson R.V."/>
        </authorList>
    </citation>
    <scope>NUCLEOTIDE SEQUENCE [LARGE SCALE GENOMIC DNA]</scope>
    <source>
        <strain>VF5</strain>
    </source>
</reference>
<proteinExistence type="evidence at protein level"/>
<comment type="function">
    <text evidence="1">This enzyme is involved in nucleotide metabolism: it produces dUMP, the immediate precursor of thymidine nucleotides and it decreases the intracellular concentration of dUTP so that uracil cannot be incorporated into DNA.</text>
</comment>
<comment type="catalytic activity">
    <reaction evidence="1">
        <text>dUTP + H2O = dUMP + diphosphate + H(+)</text>
        <dbReference type="Rhea" id="RHEA:10248"/>
        <dbReference type="ChEBI" id="CHEBI:15377"/>
        <dbReference type="ChEBI" id="CHEBI:15378"/>
        <dbReference type="ChEBI" id="CHEBI:33019"/>
        <dbReference type="ChEBI" id="CHEBI:61555"/>
        <dbReference type="ChEBI" id="CHEBI:246422"/>
        <dbReference type="EC" id="3.6.1.23"/>
    </reaction>
</comment>
<comment type="cofactor">
    <cofactor evidence="1">
        <name>Mg(2+)</name>
        <dbReference type="ChEBI" id="CHEBI:18420"/>
    </cofactor>
</comment>
<comment type="pathway">
    <text evidence="1">Pyrimidine metabolism; dUMP biosynthesis; dUMP from dCTP (dUTP route): step 2/2.</text>
</comment>
<comment type="similarity">
    <text evidence="1">Belongs to the dUTPase family.</text>
</comment>
<gene>
    <name evidence="1" type="primary">dut</name>
    <name type="ordered locus">aq_220</name>
</gene>
<accession>O66592</accession>
<feature type="chain" id="PRO_0000182824" description="Deoxyuridine 5'-triphosphate nucleotidohydrolase">
    <location>
        <begin position="1"/>
        <end position="150"/>
    </location>
</feature>
<feature type="binding site" evidence="1">
    <location>
        <begin position="69"/>
        <end position="71"/>
    </location>
    <ligand>
        <name>substrate</name>
    </ligand>
</feature>
<feature type="binding site" evidence="1">
    <location>
        <position position="82"/>
    </location>
    <ligand>
        <name>substrate</name>
    </ligand>
</feature>
<feature type="binding site" evidence="1">
    <location>
        <begin position="86"/>
        <end position="88"/>
    </location>
    <ligand>
        <name>substrate</name>
    </ligand>
</feature>
<feature type="binding site" evidence="1">
    <location>
        <position position="96"/>
    </location>
    <ligand>
        <name>substrate</name>
    </ligand>
</feature>
<sequence length="150" mass="16381">MSKVILKIKRLPHAQDLPLPSYATPHSSGLDLRAAIEKPLKIKPFERVLIPTGLILEIPEGYEGQVRPRSGLAWKKGLTVLNAPGTIDADYRGEVKVILVNLGNEEVVIERGERIAQLVIAPVQRVEVVEVEEVSQTQRGEGGFGSTGTK</sequence>
<name>DUT_AQUAE</name>